<gene>
    <name type="primary">metI</name>
    <name type="synonym">yjcI</name>
    <name type="ordered locus">BSU11870</name>
</gene>
<reference key="1">
    <citation type="journal article" date="1997" name="Nature">
        <title>The complete genome sequence of the Gram-positive bacterium Bacillus subtilis.</title>
        <authorList>
            <person name="Kunst F."/>
            <person name="Ogasawara N."/>
            <person name="Moszer I."/>
            <person name="Albertini A.M."/>
            <person name="Alloni G."/>
            <person name="Azevedo V."/>
            <person name="Bertero M.G."/>
            <person name="Bessieres P."/>
            <person name="Bolotin A."/>
            <person name="Borchert S."/>
            <person name="Borriss R."/>
            <person name="Boursier L."/>
            <person name="Brans A."/>
            <person name="Braun M."/>
            <person name="Brignell S.C."/>
            <person name="Bron S."/>
            <person name="Brouillet S."/>
            <person name="Bruschi C.V."/>
            <person name="Caldwell B."/>
            <person name="Capuano V."/>
            <person name="Carter N.M."/>
            <person name="Choi S.-K."/>
            <person name="Codani J.-J."/>
            <person name="Connerton I.F."/>
            <person name="Cummings N.J."/>
            <person name="Daniel R.A."/>
            <person name="Denizot F."/>
            <person name="Devine K.M."/>
            <person name="Duesterhoeft A."/>
            <person name="Ehrlich S.D."/>
            <person name="Emmerson P.T."/>
            <person name="Entian K.-D."/>
            <person name="Errington J."/>
            <person name="Fabret C."/>
            <person name="Ferrari E."/>
            <person name="Foulger D."/>
            <person name="Fritz C."/>
            <person name="Fujita M."/>
            <person name="Fujita Y."/>
            <person name="Fuma S."/>
            <person name="Galizzi A."/>
            <person name="Galleron N."/>
            <person name="Ghim S.-Y."/>
            <person name="Glaser P."/>
            <person name="Goffeau A."/>
            <person name="Golightly E.J."/>
            <person name="Grandi G."/>
            <person name="Guiseppi G."/>
            <person name="Guy B.J."/>
            <person name="Haga K."/>
            <person name="Haiech J."/>
            <person name="Harwood C.R."/>
            <person name="Henaut A."/>
            <person name="Hilbert H."/>
            <person name="Holsappel S."/>
            <person name="Hosono S."/>
            <person name="Hullo M.-F."/>
            <person name="Itaya M."/>
            <person name="Jones L.-M."/>
            <person name="Joris B."/>
            <person name="Karamata D."/>
            <person name="Kasahara Y."/>
            <person name="Klaerr-Blanchard M."/>
            <person name="Klein C."/>
            <person name="Kobayashi Y."/>
            <person name="Koetter P."/>
            <person name="Koningstein G."/>
            <person name="Krogh S."/>
            <person name="Kumano M."/>
            <person name="Kurita K."/>
            <person name="Lapidus A."/>
            <person name="Lardinois S."/>
            <person name="Lauber J."/>
            <person name="Lazarevic V."/>
            <person name="Lee S.-M."/>
            <person name="Levine A."/>
            <person name="Liu H."/>
            <person name="Masuda S."/>
            <person name="Mauel C."/>
            <person name="Medigue C."/>
            <person name="Medina N."/>
            <person name="Mellado R.P."/>
            <person name="Mizuno M."/>
            <person name="Moestl D."/>
            <person name="Nakai S."/>
            <person name="Noback M."/>
            <person name="Noone D."/>
            <person name="O'Reilly M."/>
            <person name="Ogawa K."/>
            <person name="Ogiwara A."/>
            <person name="Oudega B."/>
            <person name="Park S.-H."/>
            <person name="Parro V."/>
            <person name="Pohl T.M."/>
            <person name="Portetelle D."/>
            <person name="Porwollik S."/>
            <person name="Prescott A.M."/>
            <person name="Presecan E."/>
            <person name="Pujic P."/>
            <person name="Purnelle B."/>
            <person name="Rapoport G."/>
            <person name="Rey M."/>
            <person name="Reynolds S."/>
            <person name="Rieger M."/>
            <person name="Rivolta C."/>
            <person name="Rocha E."/>
            <person name="Roche B."/>
            <person name="Rose M."/>
            <person name="Sadaie Y."/>
            <person name="Sato T."/>
            <person name="Scanlan E."/>
            <person name="Schleich S."/>
            <person name="Schroeter R."/>
            <person name="Scoffone F."/>
            <person name="Sekiguchi J."/>
            <person name="Sekowska A."/>
            <person name="Seror S.J."/>
            <person name="Serror P."/>
            <person name="Shin B.-S."/>
            <person name="Soldo B."/>
            <person name="Sorokin A."/>
            <person name="Tacconi E."/>
            <person name="Takagi T."/>
            <person name="Takahashi H."/>
            <person name="Takemaru K."/>
            <person name="Takeuchi M."/>
            <person name="Tamakoshi A."/>
            <person name="Tanaka T."/>
            <person name="Terpstra P."/>
            <person name="Tognoni A."/>
            <person name="Tosato V."/>
            <person name="Uchiyama S."/>
            <person name="Vandenbol M."/>
            <person name="Vannier F."/>
            <person name="Vassarotti A."/>
            <person name="Viari A."/>
            <person name="Wambutt R."/>
            <person name="Wedler E."/>
            <person name="Wedler H."/>
            <person name="Weitzenegger T."/>
            <person name="Winters P."/>
            <person name="Wipat A."/>
            <person name="Yamamoto H."/>
            <person name="Yamane K."/>
            <person name="Yasumoto K."/>
            <person name="Yata K."/>
            <person name="Yoshida K."/>
            <person name="Yoshikawa H.-F."/>
            <person name="Zumstein E."/>
            <person name="Yoshikawa H."/>
            <person name="Danchin A."/>
        </authorList>
    </citation>
    <scope>NUCLEOTIDE SEQUENCE [LARGE SCALE GENOMIC DNA]</scope>
    <source>
        <strain>168</strain>
    </source>
</reference>
<reference key="2">
    <citation type="journal article" date="2002" name="Microbiology">
        <title>The metIC operon involved in methionine biosynthesis in Bacillus subtilis is controlled by transcription antitermination.</title>
        <authorList>
            <person name="Auger S."/>
            <person name="Yuen W.H."/>
            <person name="Danchin A."/>
            <person name="Martin-Verstraete I."/>
        </authorList>
    </citation>
    <scope>CATALYTIC ACTIVITY</scope>
    <scope>FUNCTION</scope>
    <scope>COFACTOR</scope>
    <scope>DISRUPTION PHENOTYPE</scope>
    <scope>INDUCTION</scope>
    <source>
        <strain>168</strain>
    </source>
</reference>
<proteinExistence type="evidence at protein level"/>
<accession>O31631</accession>
<name>METI_BACSU</name>
<comment type="function">
    <text evidence="2">Catalyzes the formation of L-cystathionine from O-acetyl-L-homoserine and L-cysteine. Cannot use O-succinyl-L-homoserine as substrate. Also exhibits O-acetylhomoserine thiolyase activity, catalyzing the synthesis of L-homocysteine from O-acetyl-L-homoserine and sulfide.</text>
</comment>
<comment type="catalytic activity">
    <reaction evidence="2">
        <text>O-acetyl-L-homoserine + L-cysteine = L,L-cystathionine + acetate + H(+)</text>
        <dbReference type="Rhea" id="RHEA:30931"/>
        <dbReference type="ChEBI" id="CHEBI:15378"/>
        <dbReference type="ChEBI" id="CHEBI:30089"/>
        <dbReference type="ChEBI" id="CHEBI:35235"/>
        <dbReference type="ChEBI" id="CHEBI:57716"/>
        <dbReference type="ChEBI" id="CHEBI:58161"/>
    </reaction>
</comment>
<comment type="catalytic activity">
    <reaction evidence="2">
        <text>O-acetyl-L-homoserine + hydrogen sulfide = L-homocysteine + acetate</text>
        <dbReference type="Rhea" id="RHEA:27822"/>
        <dbReference type="ChEBI" id="CHEBI:29919"/>
        <dbReference type="ChEBI" id="CHEBI:30089"/>
        <dbReference type="ChEBI" id="CHEBI:57716"/>
        <dbReference type="ChEBI" id="CHEBI:58199"/>
    </reaction>
</comment>
<comment type="cofactor">
    <cofactor evidence="4">
        <name>pyridoxal 5'-phosphate</name>
        <dbReference type="ChEBI" id="CHEBI:597326"/>
    </cofactor>
</comment>
<comment type="pathway">
    <text>Amino-acid biosynthesis; L-methionine biosynthesis via de novo pathway.</text>
</comment>
<comment type="subunit">
    <text evidence="1">Homotetramer.</text>
</comment>
<comment type="subcellular location">
    <subcellularLocation>
        <location evidence="1">Cytoplasm</location>
    </subcellularLocation>
</comment>
<comment type="induction">
    <text evidence="2">Up-regulated at the transcriptional level when sulfate, cysteine, cystathionine or homocysteine are the sulfur sources. Repressed by methionine.</text>
</comment>
<comment type="disruption phenotype">
    <text evidence="2">Cells lacking this gene are unable to grow in the presence of sulfate or cysteine as sole sulfur source, whereas their growth in the presence of homocysteine, cystathionine or methionine is similar to that of the wild-type strain.</text>
</comment>
<comment type="similarity">
    <text evidence="3">Belongs to the trans-sulfuration enzymes family.</text>
</comment>
<keyword id="KW-0028">Amino-acid biosynthesis</keyword>
<keyword id="KW-0963">Cytoplasm</keyword>
<keyword id="KW-0486">Methionine biosynthesis</keyword>
<keyword id="KW-0663">Pyridoxal phosphate</keyword>
<keyword id="KW-1185">Reference proteome</keyword>
<keyword id="KW-0808">Transferase</keyword>
<sequence>MSQHVETKLAQIGNRSDEVTGTVSAPIYLSTAYRHRGIGESTGFDYVRTKNPTRQLVEDAIANLENGARGLAFSSGMAAIQTIMALFKSGDELIVSSDLYGGTYRLFENEWKKYGLTFHYDDFSDEDCLRSKITPNTKAVFVETPTNPLMQEADIEHIARITKEHGLLLIVDNTFYTPVLQRPLELGADIVIHSATKYLGGHNDLLAGLVVVKDERLGEEMFQHQNAIGAVLPPFDSWLLMRGMKTLSLRMRQHQANAQELAAFLEEQEEISDVLYPGKGGMLSFRLQKEEWVNPFLKALKTICFAESLGGVESFITYPATQTHMDIPEEIRIANGVCNRLLRFSVGIEHAEDLKEDLKQALCQVKEGAVSFE</sequence>
<feature type="chain" id="PRO_0000360654" description="Cystathionine gamma-synthase/O-acetylhomoserine (thiol)-lyase">
    <location>
        <begin position="1"/>
        <end position="373"/>
    </location>
</feature>
<feature type="modified residue" description="N6-(pyridoxal phosphate)lysine" evidence="1">
    <location>
        <position position="197"/>
    </location>
</feature>
<dbReference type="EC" id="2.5.1.-"/>
<dbReference type="EMBL" id="AL009126">
    <property type="protein sequence ID" value="CAB13044.1"/>
    <property type="molecule type" value="Genomic_DNA"/>
</dbReference>
<dbReference type="PIR" id="A69847">
    <property type="entry name" value="A69847"/>
</dbReference>
<dbReference type="RefSeq" id="NP_389069.1">
    <property type="nucleotide sequence ID" value="NC_000964.3"/>
</dbReference>
<dbReference type="RefSeq" id="WP_003232857.1">
    <property type="nucleotide sequence ID" value="NZ_OZ025638.1"/>
</dbReference>
<dbReference type="SMR" id="O31631"/>
<dbReference type="FunCoup" id="O31631">
    <property type="interactions" value="322"/>
</dbReference>
<dbReference type="IntAct" id="O31631">
    <property type="interactions" value="1"/>
</dbReference>
<dbReference type="MINT" id="O31631"/>
<dbReference type="STRING" id="224308.BSU11870"/>
<dbReference type="PaxDb" id="224308-BSU11870"/>
<dbReference type="EnsemblBacteria" id="CAB13044">
    <property type="protein sequence ID" value="CAB13044"/>
    <property type="gene ID" value="BSU_11870"/>
</dbReference>
<dbReference type="GeneID" id="939812"/>
<dbReference type="KEGG" id="bsu:BSU11870"/>
<dbReference type="PATRIC" id="fig|224308.179.peg.1279"/>
<dbReference type="eggNOG" id="COG0626">
    <property type="taxonomic scope" value="Bacteria"/>
</dbReference>
<dbReference type="InParanoid" id="O31631"/>
<dbReference type="OrthoDB" id="9803887at2"/>
<dbReference type="PhylomeDB" id="O31631"/>
<dbReference type="BioCyc" id="BSUB:BSU11870-MONOMER"/>
<dbReference type="UniPathway" id="UPA00051"/>
<dbReference type="Proteomes" id="UP000001570">
    <property type="component" value="Chromosome"/>
</dbReference>
<dbReference type="GO" id="GO:0005737">
    <property type="term" value="C:cytoplasm"/>
    <property type="evidence" value="ECO:0000318"/>
    <property type="project" value="GO_Central"/>
</dbReference>
<dbReference type="GO" id="GO:0016846">
    <property type="term" value="F:carbon-sulfur lyase activity"/>
    <property type="evidence" value="ECO:0000318"/>
    <property type="project" value="GO_Central"/>
</dbReference>
<dbReference type="GO" id="GO:0051009">
    <property type="term" value="F:O-acetylhomoserine sulfhydrylase activity"/>
    <property type="evidence" value="ECO:0007669"/>
    <property type="project" value="RHEA"/>
</dbReference>
<dbReference type="GO" id="GO:0030170">
    <property type="term" value="F:pyridoxal phosphate binding"/>
    <property type="evidence" value="ECO:0000318"/>
    <property type="project" value="GO_Central"/>
</dbReference>
<dbReference type="GO" id="GO:0019346">
    <property type="term" value="P:transsulfuration"/>
    <property type="evidence" value="ECO:0000318"/>
    <property type="project" value="GO_Central"/>
</dbReference>
<dbReference type="CDD" id="cd00614">
    <property type="entry name" value="CGS_like"/>
    <property type="match status" value="1"/>
</dbReference>
<dbReference type="FunFam" id="3.90.1150.10:FF:000073">
    <property type="entry name" value="Cystathionine gamma-synthase"/>
    <property type="match status" value="1"/>
</dbReference>
<dbReference type="FunFam" id="3.40.640.10:FF:000009">
    <property type="entry name" value="Cystathionine gamma-synthase homolog"/>
    <property type="match status" value="1"/>
</dbReference>
<dbReference type="Gene3D" id="3.90.1150.10">
    <property type="entry name" value="Aspartate Aminotransferase, domain 1"/>
    <property type="match status" value="1"/>
</dbReference>
<dbReference type="Gene3D" id="3.40.640.10">
    <property type="entry name" value="Type I PLP-dependent aspartate aminotransferase-like (Major domain)"/>
    <property type="match status" value="1"/>
</dbReference>
<dbReference type="InterPro" id="IPR000277">
    <property type="entry name" value="Cys/Met-Metab_PyrdxlP-dep_enz"/>
</dbReference>
<dbReference type="InterPro" id="IPR054542">
    <property type="entry name" value="Cys_met_metab_PP"/>
</dbReference>
<dbReference type="InterPro" id="IPR015424">
    <property type="entry name" value="PyrdxlP-dep_Trfase"/>
</dbReference>
<dbReference type="InterPro" id="IPR015421">
    <property type="entry name" value="PyrdxlP-dep_Trfase_major"/>
</dbReference>
<dbReference type="InterPro" id="IPR015422">
    <property type="entry name" value="PyrdxlP-dep_Trfase_small"/>
</dbReference>
<dbReference type="NCBIfam" id="NF006095">
    <property type="entry name" value="PRK08247.1"/>
    <property type="match status" value="1"/>
</dbReference>
<dbReference type="PANTHER" id="PTHR11808:SF90">
    <property type="entry name" value="CYSTATHIONINE GAMMA-SYNTHASE"/>
    <property type="match status" value="1"/>
</dbReference>
<dbReference type="PANTHER" id="PTHR11808">
    <property type="entry name" value="TRANS-SULFURATION ENZYME FAMILY MEMBER"/>
    <property type="match status" value="1"/>
</dbReference>
<dbReference type="Pfam" id="PF01053">
    <property type="entry name" value="Cys_Met_Meta_PP"/>
    <property type="match status" value="1"/>
</dbReference>
<dbReference type="PIRSF" id="PIRSF001434">
    <property type="entry name" value="CGS"/>
    <property type="match status" value="1"/>
</dbReference>
<dbReference type="SUPFAM" id="SSF53383">
    <property type="entry name" value="PLP-dependent transferases"/>
    <property type="match status" value="1"/>
</dbReference>
<dbReference type="PROSITE" id="PS00868">
    <property type="entry name" value="CYS_MET_METAB_PP"/>
    <property type="match status" value="1"/>
</dbReference>
<protein>
    <recommendedName>
        <fullName>Cystathionine gamma-synthase/O-acetylhomoserine (thiol)-lyase</fullName>
        <shortName>CGS/OAH thiolyase</shortName>
        <ecNumber>2.5.1.-</ecNumber>
    </recommendedName>
    <alternativeName>
        <fullName>O-acetylhomoserine sulfhydrylase</fullName>
        <shortName>OAH sulfhydrylase</shortName>
    </alternativeName>
</protein>
<evidence type="ECO:0000250" key="1"/>
<evidence type="ECO:0000269" key="2">
    <source>
    </source>
</evidence>
<evidence type="ECO:0000305" key="3"/>
<evidence type="ECO:0000305" key="4">
    <source>
    </source>
</evidence>
<organism>
    <name type="scientific">Bacillus subtilis (strain 168)</name>
    <dbReference type="NCBI Taxonomy" id="224308"/>
    <lineage>
        <taxon>Bacteria</taxon>
        <taxon>Bacillati</taxon>
        <taxon>Bacillota</taxon>
        <taxon>Bacilli</taxon>
        <taxon>Bacillales</taxon>
        <taxon>Bacillaceae</taxon>
        <taxon>Bacillus</taxon>
    </lineage>
</organism>